<accession>E9Q1P8</accession>
<accession>Q8BJC6</accession>
<dbReference type="EMBL" id="AC118255">
    <property type="status" value="NOT_ANNOTATED_CDS"/>
    <property type="molecule type" value="Genomic_DNA"/>
</dbReference>
<dbReference type="EMBL" id="AK087491">
    <property type="protein sequence ID" value="BAC39896.1"/>
    <property type="molecule type" value="mRNA"/>
</dbReference>
<dbReference type="CCDS" id="CCDS52711.1"/>
<dbReference type="RefSeq" id="NP_001158070.1">
    <property type="nucleotide sequence ID" value="NM_001164598.3"/>
</dbReference>
<dbReference type="SMR" id="E9Q1P8"/>
<dbReference type="BioGRID" id="234763">
    <property type="interactions" value="5"/>
</dbReference>
<dbReference type="FunCoup" id="E9Q1P8">
    <property type="interactions" value="3759"/>
</dbReference>
<dbReference type="IntAct" id="E9Q1P8">
    <property type="interactions" value="1"/>
</dbReference>
<dbReference type="MINT" id="E9Q1P8"/>
<dbReference type="STRING" id="10090.ENSMUSP00000062753"/>
<dbReference type="GlyGen" id="E9Q1P8">
    <property type="glycosylation" value="7 sites, 2 N-linked glycans (2 sites), 1 O-linked glycan (3 sites)"/>
</dbReference>
<dbReference type="iPTMnet" id="E9Q1P8"/>
<dbReference type="PhosphoSitePlus" id="E9Q1P8"/>
<dbReference type="jPOST" id="E9Q1P8"/>
<dbReference type="PaxDb" id="10090-ENSMUSP00000062753"/>
<dbReference type="PeptideAtlas" id="E9Q1P8"/>
<dbReference type="ProteomicsDB" id="269519"/>
<dbReference type="Pumba" id="E9Q1P8"/>
<dbReference type="Antibodypedia" id="34693">
    <property type="antibodies" value="214 antibodies from 29 providers"/>
</dbReference>
<dbReference type="Ensembl" id="ENSMUST00000054960.9">
    <property type="protein sequence ID" value="ENSMUSP00000062753.7"/>
    <property type="gene ID" value="ENSMUSG00000051495.9"/>
</dbReference>
<dbReference type="GeneID" id="270110"/>
<dbReference type="KEGG" id="mmu:270110"/>
<dbReference type="UCSC" id="uc009nyw.2">
    <property type="organism name" value="mouse"/>
</dbReference>
<dbReference type="AGR" id="MGI:2443921"/>
<dbReference type="CTD" id="359948"/>
<dbReference type="MGI" id="MGI:2443921">
    <property type="gene designation" value="Irf2bp2"/>
</dbReference>
<dbReference type="VEuPathDB" id="HostDB:ENSMUSG00000051495"/>
<dbReference type="eggNOG" id="KOG3579">
    <property type="taxonomic scope" value="Eukaryota"/>
</dbReference>
<dbReference type="GeneTree" id="ENSGT00940000160591"/>
<dbReference type="HOGENOM" id="CLU_019307_2_0_1"/>
<dbReference type="InParanoid" id="E9Q1P8"/>
<dbReference type="OMA" id="FKKEPGM"/>
<dbReference type="OrthoDB" id="10065080at2759"/>
<dbReference type="PhylomeDB" id="E9Q1P8"/>
<dbReference type="TreeFam" id="TF317075"/>
<dbReference type="BioGRID-ORCS" id="270110">
    <property type="hits" value="10 hits in 80 CRISPR screens"/>
</dbReference>
<dbReference type="ChiTaRS" id="Irf2bp2">
    <property type="organism name" value="mouse"/>
</dbReference>
<dbReference type="PRO" id="PR:E9Q1P8"/>
<dbReference type="Proteomes" id="UP000000589">
    <property type="component" value="Chromosome 8"/>
</dbReference>
<dbReference type="RNAct" id="E9Q1P8">
    <property type="molecule type" value="protein"/>
</dbReference>
<dbReference type="Bgee" id="ENSMUSG00000051495">
    <property type="expression patterns" value="Expressed in aortic valve and 214 other cell types or tissues"/>
</dbReference>
<dbReference type="GO" id="GO:0005737">
    <property type="term" value="C:cytoplasm"/>
    <property type="evidence" value="ECO:0007669"/>
    <property type="project" value="UniProtKB-SubCell"/>
</dbReference>
<dbReference type="GO" id="GO:0005654">
    <property type="term" value="C:nucleoplasm"/>
    <property type="evidence" value="ECO:0007669"/>
    <property type="project" value="Ensembl"/>
</dbReference>
<dbReference type="GO" id="GO:0005634">
    <property type="term" value="C:nucleus"/>
    <property type="evidence" value="ECO:0000266"/>
    <property type="project" value="MGI"/>
</dbReference>
<dbReference type="GO" id="GO:0003714">
    <property type="term" value="F:transcription corepressor activity"/>
    <property type="evidence" value="ECO:0000266"/>
    <property type="project" value="MGI"/>
</dbReference>
<dbReference type="GO" id="GO:0008270">
    <property type="term" value="F:zinc ion binding"/>
    <property type="evidence" value="ECO:0007669"/>
    <property type="project" value="UniProtKB-KW"/>
</dbReference>
<dbReference type="GO" id="GO:0002327">
    <property type="term" value="P:immature B cell differentiation"/>
    <property type="evidence" value="ECO:0000250"/>
    <property type="project" value="UniProtKB"/>
</dbReference>
<dbReference type="GO" id="GO:0000122">
    <property type="term" value="P:negative regulation of transcription by RNA polymerase II"/>
    <property type="evidence" value="ECO:0000266"/>
    <property type="project" value="MGI"/>
</dbReference>
<dbReference type="CDD" id="cd16716">
    <property type="entry name" value="vRING-HC_IRF2BP2"/>
    <property type="match status" value="1"/>
</dbReference>
<dbReference type="FunFam" id="1.10.10.1580:FF:000001">
    <property type="entry name" value="interferon regulatory factor 2-binding protein 2"/>
    <property type="match status" value="1"/>
</dbReference>
<dbReference type="Gene3D" id="1.10.10.1580">
    <property type="entry name" value="Interferon regulatory factor 2-binding protein"/>
    <property type="match status" value="1"/>
</dbReference>
<dbReference type="InterPro" id="IPR044882">
    <property type="entry name" value="I2BP1/2_C3HC4-RING_sf"/>
</dbReference>
<dbReference type="InterPro" id="IPR022750">
    <property type="entry name" value="Interferon_reg_fac2-bd1_2_Znf"/>
</dbReference>
<dbReference type="PANTHER" id="PTHR10816:SF18">
    <property type="entry name" value="INTERFERON REGULATORY FACTOR 2-BINDING PROTEIN 2"/>
    <property type="match status" value="1"/>
</dbReference>
<dbReference type="PANTHER" id="PTHR10816">
    <property type="entry name" value="MYELIN TRANSCRIPTION FACTOR 1-RELATED"/>
    <property type="match status" value="1"/>
</dbReference>
<dbReference type="Pfam" id="PF11261">
    <property type="entry name" value="IRF-2BP1_2"/>
    <property type="match status" value="1"/>
</dbReference>
<dbReference type="Pfam" id="PF25457">
    <property type="entry name" value="IRF-2BP1_2_M"/>
    <property type="match status" value="1"/>
</dbReference>
<dbReference type="Pfam" id="PF25454">
    <property type="entry name" value="zf-C3HC4_IRF-2BP1_2"/>
    <property type="match status" value="1"/>
</dbReference>
<dbReference type="SUPFAM" id="SSF57850">
    <property type="entry name" value="RING/U-box"/>
    <property type="match status" value="1"/>
</dbReference>
<sequence length="570" mass="59292">MAAAVAVAAASRRQSCYLCDLPRMPWAMIWDFTEPVCRGCVNYEGADRVEFVIETARQLKRAHGCFPEGRSPTGAQPAAAKPPPLSAKDLLLQPPPQLGHAGAEAARAQAMERYPLAPDRAPRLASDFSTRAGAGLPQSAAQQSAPANGILVPNGFSKLEEPPELNRQSPNPRRAHAVPPTLVPLVNGSAALGLSGRAAATLAAVSGTPGLGAQPAELGTHKRPASVSSAAAEHEAREPSKEKAQPAHRSPADSLSSAAGASELSAEGAGKGRAPGEQDWASRPKTVRDTLLALHQHGHSGPFESKFKKEPALTAAGRLLGFEANGANGSKAVARTARKRKPSPEPEGEVGPPKINGETQPWLSTSTEGLKIPITPTSSFVSPPPPTASPHSNRTTPPEAAQNGQSPMAALILVADNAGGSHASKDATQVHSTTRRNSSSPPSPSSMNQRRLGPREVGGQATGSTGGLEPVHPASLPDSSLAASAPLCCTLCHERLEDTHFVQCPSVPSHKFCFPCSRQSIKQQGASGEVYCPSGEKCPLVGSNVPWAFMQGEIATILAGDVKVKKERDS</sequence>
<gene>
    <name type="primary">Irf2bp2</name>
</gene>
<keyword id="KW-0007">Acetylation</keyword>
<keyword id="KW-0010">Activator</keyword>
<keyword id="KW-0963">Cytoplasm</keyword>
<keyword id="KW-1017">Isopeptide bond</keyword>
<keyword id="KW-0479">Metal-binding</keyword>
<keyword id="KW-0539">Nucleus</keyword>
<keyword id="KW-0597">Phosphoprotein</keyword>
<keyword id="KW-1185">Reference proteome</keyword>
<keyword id="KW-0678">Repressor</keyword>
<keyword id="KW-0804">Transcription</keyword>
<keyword id="KW-0805">Transcription regulation</keyword>
<keyword id="KW-0832">Ubl conjugation</keyword>
<keyword id="KW-0862">Zinc</keyword>
<keyword id="KW-0863">Zinc-finger</keyword>
<evidence type="ECO:0000250" key="1"/>
<evidence type="ECO:0000250" key="2">
    <source>
        <dbReference type="UniProtKB" id="Q7Z5L9"/>
    </source>
</evidence>
<evidence type="ECO:0000256" key="3">
    <source>
        <dbReference type="SAM" id="MobiDB-lite"/>
    </source>
</evidence>
<evidence type="ECO:0000305" key="4"/>
<evidence type="ECO:0007744" key="5">
    <source>
    </source>
</evidence>
<evidence type="ECO:0007744" key="6">
    <source>
    </source>
</evidence>
<evidence type="ECO:0007744" key="7">
    <source>
    </source>
</evidence>
<organism>
    <name type="scientific">Mus musculus</name>
    <name type="common">Mouse</name>
    <dbReference type="NCBI Taxonomy" id="10090"/>
    <lineage>
        <taxon>Eukaryota</taxon>
        <taxon>Metazoa</taxon>
        <taxon>Chordata</taxon>
        <taxon>Craniata</taxon>
        <taxon>Vertebrata</taxon>
        <taxon>Euteleostomi</taxon>
        <taxon>Mammalia</taxon>
        <taxon>Eutheria</taxon>
        <taxon>Euarchontoglires</taxon>
        <taxon>Glires</taxon>
        <taxon>Rodentia</taxon>
        <taxon>Myomorpha</taxon>
        <taxon>Muroidea</taxon>
        <taxon>Muridae</taxon>
        <taxon>Murinae</taxon>
        <taxon>Mus</taxon>
        <taxon>Mus</taxon>
    </lineage>
</organism>
<feature type="initiator methionine" description="Removed" evidence="2">
    <location>
        <position position="1"/>
    </location>
</feature>
<feature type="chain" id="PRO_0000418085" description="Interferon regulatory factor 2-binding protein 2">
    <location>
        <begin position="2"/>
        <end position="570"/>
    </location>
</feature>
<feature type="zinc finger region" description="RING-type; degenerate">
    <location>
        <begin position="489"/>
        <end position="536"/>
    </location>
</feature>
<feature type="region of interest" description="Disordered" evidence="3">
    <location>
        <begin position="66"/>
        <end position="85"/>
    </location>
</feature>
<feature type="region of interest" description="Disordered" evidence="3">
    <location>
        <begin position="130"/>
        <end position="179"/>
    </location>
</feature>
<feature type="region of interest" description="Disordered" evidence="3">
    <location>
        <begin position="213"/>
        <end position="283"/>
    </location>
</feature>
<feature type="region of interest" description="Disordered" evidence="3">
    <location>
        <begin position="330"/>
        <end position="403"/>
    </location>
</feature>
<feature type="region of interest" description="Disordered" evidence="3">
    <location>
        <begin position="419"/>
        <end position="477"/>
    </location>
</feature>
<feature type="compositionally biased region" description="Low complexity" evidence="3">
    <location>
        <begin position="132"/>
        <end position="147"/>
    </location>
</feature>
<feature type="compositionally biased region" description="Basic and acidic residues" evidence="3">
    <location>
        <begin position="232"/>
        <end position="245"/>
    </location>
</feature>
<feature type="compositionally biased region" description="Low complexity" evidence="3">
    <location>
        <begin position="254"/>
        <end position="268"/>
    </location>
</feature>
<feature type="compositionally biased region" description="Basic and acidic residues" evidence="3">
    <location>
        <begin position="274"/>
        <end position="283"/>
    </location>
</feature>
<feature type="compositionally biased region" description="Polar residues" evidence="3">
    <location>
        <begin position="357"/>
        <end position="368"/>
    </location>
</feature>
<feature type="compositionally biased region" description="Polar residues" evidence="3">
    <location>
        <begin position="426"/>
        <end position="437"/>
    </location>
</feature>
<feature type="modified residue" description="N-acetylalanine" evidence="2">
    <location>
        <position position="2"/>
    </location>
</feature>
<feature type="modified residue" description="Phosphoserine" evidence="2">
    <location>
        <position position="71"/>
    </location>
</feature>
<feature type="modified residue" description="Phosphoserine" evidence="6 7">
    <location>
        <position position="169"/>
    </location>
</feature>
<feature type="modified residue" description="Phosphoserine" evidence="6">
    <location>
        <position position="226"/>
    </location>
</feature>
<feature type="modified residue" description="Phosphoserine" evidence="5 7">
    <location>
        <position position="250"/>
    </location>
</feature>
<feature type="modified residue" description="Phosphoserine" evidence="2">
    <location>
        <position position="300"/>
    </location>
</feature>
<feature type="modified residue" description="Phosphoserine" evidence="6 7">
    <location>
        <position position="343"/>
    </location>
</feature>
<feature type="modified residue" description="Phosphoserine" evidence="7">
    <location>
        <position position="389"/>
    </location>
</feature>
<feature type="modified residue" description="Phosphoserine" evidence="7">
    <location>
        <position position="406"/>
    </location>
</feature>
<feature type="modified residue" description="Phosphoserine" evidence="5">
    <location>
        <position position="438"/>
    </location>
</feature>
<feature type="modified residue" description="Phosphoserine" evidence="5 7">
    <location>
        <position position="440"/>
    </location>
</feature>
<feature type="modified residue" description="Phosphoserine" evidence="2">
    <location>
        <position position="443"/>
    </location>
</feature>
<feature type="cross-link" description="Glycyl lysine isopeptide (Lys-Gly) (interchain with G-Cter in SUMO2)" evidence="2">
    <location>
        <position position="271"/>
    </location>
</feature>
<feature type="cross-link" description="Glycyl lysine isopeptide (Lys-Gly) (interchain with G-Cter in SUMO2)" evidence="2">
    <location>
        <position position="285"/>
    </location>
</feature>
<feature type="cross-link" description="Glycyl lysine isopeptide (Lys-Gly) (interchain with G-Cter in SUMO2)" evidence="2">
    <location>
        <position position="306"/>
    </location>
</feature>
<feature type="cross-link" description="Glycyl lysine isopeptide (Lys-Gly) (interchain with G-Cter in SUMO2)" evidence="2">
    <location>
        <position position="308"/>
    </location>
</feature>
<feature type="cross-link" description="Glycyl lysine isopeptide (Lys-Gly) (interchain with G-Cter in SUMO2)" evidence="2">
    <location>
        <position position="331"/>
    </location>
</feature>
<protein>
    <recommendedName>
        <fullName>Interferon regulatory factor 2-binding protein 2</fullName>
        <shortName>IRF-2-binding protein 2</shortName>
        <shortName>IRF-2BP2</shortName>
    </recommendedName>
</protein>
<proteinExistence type="evidence at protein level"/>
<reference key="1">
    <citation type="journal article" date="2009" name="PLoS Biol.">
        <title>Lineage-specific biology revealed by a finished genome assembly of the mouse.</title>
        <authorList>
            <person name="Church D.M."/>
            <person name="Goodstadt L."/>
            <person name="Hillier L.W."/>
            <person name="Zody M.C."/>
            <person name="Goldstein S."/>
            <person name="She X."/>
            <person name="Bult C.J."/>
            <person name="Agarwala R."/>
            <person name="Cherry J.L."/>
            <person name="DiCuccio M."/>
            <person name="Hlavina W."/>
            <person name="Kapustin Y."/>
            <person name="Meric P."/>
            <person name="Maglott D."/>
            <person name="Birtle Z."/>
            <person name="Marques A.C."/>
            <person name="Graves T."/>
            <person name="Zhou S."/>
            <person name="Teague B."/>
            <person name="Potamousis K."/>
            <person name="Churas C."/>
            <person name="Place M."/>
            <person name="Herschleb J."/>
            <person name="Runnheim R."/>
            <person name="Forrest D."/>
            <person name="Amos-Landgraf J."/>
            <person name="Schwartz D.C."/>
            <person name="Cheng Z."/>
            <person name="Lindblad-Toh K."/>
            <person name="Eichler E.E."/>
            <person name="Ponting C.P."/>
        </authorList>
    </citation>
    <scope>NUCLEOTIDE SEQUENCE [LARGE SCALE GENOMIC DNA]</scope>
    <source>
        <strain>C57BL/6J</strain>
    </source>
</reference>
<reference key="2">
    <citation type="journal article" date="2005" name="Science">
        <title>The transcriptional landscape of the mammalian genome.</title>
        <authorList>
            <person name="Carninci P."/>
            <person name="Kasukawa T."/>
            <person name="Katayama S."/>
            <person name="Gough J."/>
            <person name="Frith M.C."/>
            <person name="Maeda N."/>
            <person name="Oyama R."/>
            <person name="Ravasi T."/>
            <person name="Lenhard B."/>
            <person name="Wells C."/>
            <person name="Kodzius R."/>
            <person name="Shimokawa K."/>
            <person name="Bajic V.B."/>
            <person name="Brenner S.E."/>
            <person name="Batalov S."/>
            <person name="Forrest A.R."/>
            <person name="Zavolan M."/>
            <person name="Davis M.J."/>
            <person name="Wilming L.G."/>
            <person name="Aidinis V."/>
            <person name="Allen J.E."/>
            <person name="Ambesi-Impiombato A."/>
            <person name="Apweiler R."/>
            <person name="Aturaliya R.N."/>
            <person name="Bailey T.L."/>
            <person name="Bansal M."/>
            <person name="Baxter L."/>
            <person name="Beisel K.W."/>
            <person name="Bersano T."/>
            <person name="Bono H."/>
            <person name="Chalk A.M."/>
            <person name="Chiu K.P."/>
            <person name="Choudhary V."/>
            <person name="Christoffels A."/>
            <person name="Clutterbuck D.R."/>
            <person name="Crowe M.L."/>
            <person name="Dalla E."/>
            <person name="Dalrymple B.P."/>
            <person name="de Bono B."/>
            <person name="Della Gatta G."/>
            <person name="di Bernardo D."/>
            <person name="Down T."/>
            <person name="Engstrom P."/>
            <person name="Fagiolini M."/>
            <person name="Faulkner G."/>
            <person name="Fletcher C.F."/>
            <person name="Fukushima T."/>
            <person name="Furuno M."/>
            <person name="Futaki S."/>
            <person name="Gariboldi M."/>
            <person name="Georgii-Hemming P."/>
            <person name="Gingeras T.R."/>
            <person name="Gojobori T."/>
            <person name="Green R.E."/>
            <person name="Gustincich S."/>
            <person name="Harbers M."/>
            <person name="Hayashi Y."/>
            <person name="Hensch T.K."/>
            <person name="Hirokawa N."/>
            <person name="Hill D."/>
            <person name="Huminiecki L."/>
            <person name="Iacono M."/>
            <person name="Ikeo K."/>
            <person name="Iwama A."/>
            <person name="Ishikawa T."/>
            <person name="Jakt M."/>
            <person name="Kanapin A."/>
            <person name="Katoh M."/>
            <person name="Kawasawa Y."/>
            <person name="Kelso J."/>
            <person name="Kitamura H."/>
            <person name="Kitano H."/>
            <person name="Kollias G."/>
            <person name="Krishnan S.P."/>
            <person name="Kruger A."/>
            <person name="Kummerfeld S.K."/>
            <person name="Kurochkin I.V."/>
            <person name="Lareau L.F."/>
            <person name="Lazarevic D."/>
            <person name="Lipovich L."/>
            <person name="Liu J."/>
            <person name="Liuni S."/>
            <person name="McWilliam S."/>
            <person name="Madan Babu M."/>
            <person name="Madera M."/>
            <person name="Marchionni L."/>
            <person name="Matsuda H."/>
            <person name="Matsuzawa S."/>
            <person name="Miki H."/>
            <person name="Mignone F."/>
            <person name="Miyake S."/>
            <person name="Morris K."/>
            <person name="Mottagui-Tabar S."/>
            <person name="Mulder N."/>
            <person name="Nakano N."/>
            <person name="Nakauchi H."/>
            <person name="Ng P."/>
            <person name="Nilsson R."/>
            <person name="Nishiguchi S."/>
            <person name="Nishikawa S."/>
            <person name="Nori F."/>
            <person name="Ohara O."/>
            <person name="Okazaki Y."/>
            <person name="Orlando V."/>
            <person name="Pang K.C."/>
            <person name="Pavan W.J."/>
            <person name="Pavesi G."/>
            <person name="Pesole G."/>
            <person name="Petrovsky N."/>
            <person name="Piazza S."/>
            <person name="Reed J."/>
            <person name="Reid J.F."/>
            <person name="Ring B.Z."/>
            <person name="Ringwald M."/>
            <person name="Rost B."/>
            <person name="Ruan Y."/>
            <person name="Salzberg S.L."/>
            <person name="Sandelin A."/>
            <person name="Schneider C."/>
            <person name="Schoenbach C."/>
            <person name="Sekiguchi K."/>
            <person name="Semple C.A."/>
            <person name="Seno S."/>
            <person name="Sessa L."/>
            <person name="Sheng Y."/>
            <person name="Shibata Y."/>
            <person name="Shimada H."/>
            <person name="Shimada K."/>
            <person name="Silva D."/>
            <person name="Sinclair B."/>
            <person name="Sperling S."/>
            <person name="Stupka E."/>
            <person name="Sugiura K."/>
            <person name="Sultana R."/>
            <person name="Takenaka Y."/>
            <person name="Taki K."/>
            <person name="Tammoja K."/>
            <person name="Tan S.L."/>
            <person name="Tang S."/>
            <person name="Taylor M.S."/>
            <person name="Tegner J."/>
            <person name="Teichmann S.A."/>
            <person name="Ueda H.R."/>
            <person name="van Nimwegen E."/>
            <person name="Verardo R."/>
            <person name="Wei C.L."/>
            <person name="Yagi K."/>
            <person name="Yamanishi H."/>
            <person name="Zabarovsky E."/>
            <person name="Zhu S."/>
            <person name="Zimmer A."/>
            <person name="Hide W."/>
            <person name="Bult C."/>
            <person name="Grimmond S.M."/>
            <person name="Teasdale R.D."/>
            <person name="Liu E.T."/>
            <person name="Brusic V."/>
            <person name="Quackenbush J."/>
            <person name="Wahlestedt C."/>
            <person name="Mattick J.S."/>
            <person name="Hume D.A."/>
            <person name="Kai C."/>
            <person name="Sasaki D."/>
            <person name="Tomaru Y."/>
            <person name="Fukuda S."/>
            <person name="Kanamori-Katayama M."/>
            <person name="Suzuki M."/>
            <person name="Aoki J."/>
            <person name="Arakawa T."/>
            <person name="Iida J."/>
            <person name="Imamura K."/>
            <person name="Itoh M."/>
            <person name="Kato T."/>
            <person name="Kawaji H."/>
            <person name="Kawagashira N."/>
            <person name="Kawashima T."/>
            <person name="Kojima M."/>
            <person name="Kondo S."/>
            <person name="Konno H."/>
            <person name="Nakano K."/>
            <person name="Ninomiya N."/>
            <person name="Nishio T."/>
            <person name="Okada M."/>
            <person name="Plessy C."/>
            <person name="Shibata K."/>
            <person name="Shiraki T."/>
            <person name="Suzuki S."/>
            <person name="Tagami M."/>
            <person name="Waki K."/>
            <person name="Watahiki A."/>
            <person name="Okamura-Oho Y."/>
            <person name="Suzuki H."/>
            <person name="Kawai J."/>
            <person name="Hayashizaki Y."/>
        </authorList>
    </citation>
    <scope>NUCLEOTIDE SEQUENCE [LARGE SCALE MRNA] OF 432-570</scope>
    <source>
        <strain>C57BL/6J</strain>
        <tissue>Eye</tissue>
    </source>
</reference>
<reference key="3">
    <citation type="journal article" date="2007" name="Proc. Natl. Acad. Sci. U.S.A.">
        <title>Large-scale phosphorylation analysis of mouse liver.</title>
        <authorList>
            <person name="Villen J."/>
            <person name="Beausoleil S.A."/>
            <person name="Gerber S.A."/>
            <person name="Gygi S.P."/>
        </authorList>
    </citation>
    <scope>PHOSPHORYLATION [LARGE SCALE ANALYSIS] AT SER-250; SER-438 AND SER-440</scope>
    <scope>IDENTIFICATION BY MASS SPECTROMETRY [LARGE SCALE ANALYSIS]</scope>
    <source>
        <tissue>Liver</tissue>
    </source>
</reference>
<reference key="4">
    <citation type="journal article" date="2009" name="Immunity">
        <title>The phagosomal proteome in interferon-gamma-activated macrophages.</title>
        <authorList>
            <person name="Trost M."/>
            <person name="English L."/>
            <person name="Lemieux S."/>
            <person name="Courcelles M."/>
            <person name="Desjardins M."/>
            <person name="Thibault P."/>
        </authorList>
    </citation>
    <scope>PHOSPHORYLATION [LARGE SCALE ANALYSIS] AT SER-169; SER-226 AND SER-343</scope>
    <scope>IDENTIFICATION BY MASS SPECTROMETRY [LARGE SCALE ANALYSIS]</scope>
</reference>
<reference key="5">
    <citation type="journal article" date="2010" name="Cell">
        <title>A tissue-specific atlas of mouse protein phosphorylation and expression.</title>
        <authorList>
            <person name="Huttlin E.L."/>
            <person name="Jedrychowski M.P."/>
            <person name="Elias J.E."/>
            <person name="Goswami T."/>
            <person name="Rad R."/>
            <person name="Beausoleil S.A."/>
            <person name="Villen J."/>
            <person name="Haas W."/>
            <person name="Sowa M.E."/>
            <person name="Gygi S.P."/>
        </authorList>
    </citation>
    <scope>PHOSPHORYLATION [LARGE SCALE ANALYSIS] AT SER-169; SER-250; SER-343; SER-389; SER-406 AND SER-440</scope>
    <scope>IDENTIFICATION BY MASS SPECTROMETRY [LARGE SCALE ANALYSIS]</scope>
    <source>
        <tissue>Brain</tissue>
        <tissue>Brown adipose tissue</tissue>
        <tissue>Heart</tissue>
        <tissue>Kidney</tissue>
        <tissue>Liver</tissue>
        <tissue>Lung</tissue>
        <tissue>Pancreas</tissue>
        <tissue>Spleen</tissue>
    </source>
</reference>
<name>I2BP2_MOUSE</name>
<comment type="function">
    <text evidence="2">Acts as a transcriptional corepressor in a IRF2-dependent manner, this repression is not mediated by histone deacetylase activities. Represses the NFAT1-dependent transactivation of NFAT-responsive promoters. Acts as a coactivator of VEGFA expression in cardiac and skeletal muscles. Plays a role in immature B-cell differentiation (By similarity).</text>
</comment>
<comment type="subunit">
    <text evidence="1">Interacts with IRF2. Part of a corepressor complex containing IRF2 and IRF2BP1. Interacts with VGLL4 (By similarity).</text>
</comment>
<comment type="subcellular location">
    <subcellularLocation>
        <location evidence="1">Cytoplasm</location>
    </subcellularLocation>
    <subcellularLocation>
        <location evidence="1">Nucleus</location>
    </subcellularLocation>
</comment>
<comment type="domain">
    <text evidence="1">The C-terminal RING-type zinc finger domain is sufficient for interaction with IRF2.</text>
</comment>
<comment type="PTM">
    <text evidence="1">Phosphorylation at Ser-343 is required for nuclear targeting.</text>
</comment>
<comment type="similarity">
    <text evidence="4">Belongs to the IRF2BP family.</text>
</comment>